<evidence type="ECO:0000255" key="1">
    <source>
        <dbReference type="HAMAP-Rule" id="MF_01374"/>
    </source>
</evidence>
<proteinExistence type="inferred from homology"/>
<sequence>MNLNSIPAFQDNYIWVLTNDEGRCVIVDPGEAAPVLKAIAEHKWMPEAIFLTHHHHDHVGGVKELLQHFPQMTVYGPAETQDKGATHLVGDGDTIRVLGEKFTLFATPGHTLGHVCYFSHPYLFCGDTLFSGGCGRLFEGTPSQMYQSLMKINSLPDDTLICSAHEYTLANIKFALSILPHDSFINEYYRKVKELRVKKQMTLPVILKNERKINLFLRTEDIDLINEINKETILQQPEARFAWLRSKKDTF</sequence>
<reference key="1">
    <citation type="journal article" date="2011" name="J. Bacteriol.">
        <title>Comparative genomics of 28 Salmonella enterica isolates: evidence for CRISPR-mediated adaptive sublineage evolution.</title>
        <authorList>
            <person name="Fricke W.F."/>
            <person name="Mammel M.K."/>
            <person name="McDermott P.F."/>
            <person name="Tartera C."/>
            <person name="White D.G."/>
            <person name="Leclerc J.E."/>
            <person name="Ravel J."/>
            <person name="Cebula T.A."/>
        </authorList>
    </citation>
    <scope>NUCLEOTIDE SEQUENCE [LARGE SCALE GENOMIC DNA]</scope>
    <source>
        <strain>CT_02021853</strain>
    </source>
</reference>
<keyword id="KW-0378">Hydrolase</keyword>
<keyword id="KW-0479">Metal-binding</keyword>
<keyword id="KW-0862">Zinc</keyword>
<feature type="chain" id="PRO_1000144795" description="Hydroxyacylglutathione hydrolase">
    <location>
        <begin position="1"/>
        <end position="251"/>
    </location>
</feature>
<feature type="binding site" evidence="1">
    <location>
        <position position="53"/>
    </location>
    <ligand>
        <name>Zn(2+)</name>
        <dbReference type="ChEBI" id="CHEBI:29105"/>
        <label>1</label>
    </ligand>
</feature>
<feature type="binding site" evidence="1">
    <location>
        <position position="55"/>
    </location>
    <ligand>
        <name>Zn(2+)</name>
        <dbReference type="ChEBI" id="CHEBI:29105"/>
        <label>1</label>
    </ligand>
</feature>
<feature type="binding site" evidence="1">
    <location>
        <position position="57"/>
    </location>
    <ligand>
        <name>Zn(2+)</name>
        <dbReference type="ChEBI" id="CHEBI:29105"/>
        <label>2</label>
    </ligand>
</feature>
<feature type="binding site" evidence="1">
    <location>
        <position position="58"/>
    </location>
    <ligand>
        <name>Zn(2+)</name>
        <dbReference type="ChEBI" id="CHEBI:29105"/>
        <label>2</label>
    </ligand>
</feature>
<feature type="binding site" evidence="1">
    <location>
        <position position="110"/>
    </location>
    <ligand>
        <name>Zn(2+)</name>
        <dbReference type="ChEBI" id="CHEBI:29105"/>
        <label>1</label>
    </ligand>
</feature>
<feature type="binding site" evidence="1">
    <location>
        <position position="127"/>
    </location>
    <ligand>
        <name>Zn(2+)</name>
        <dbReference type="ChEBI" id="CHEBI:29105"/>
        <label>1</label>
    </ligand>
</feature>
<feature type="binding site" evidence="1">
    <location>
        <position position="127"/>
    </location>
    <ligand>
        <name>Zn(2+)</name>
        <dbReference type="ChEBI" id="CHEBI:29105"/>
        <label>2</label>
    </ligand>
</feature>
<feature type="binding site" evidence="1">
    <location>
        <position position="165"/>
    </location>
    <ligand>
        <name>Zn(2+)</name>
        <dbReference type="ChEBI" id="CHEBI:29105"/>
        <label>2</label>
    </ligand>
</feature>
<organism>
    <name type="scientific">Salmonella dublin (strain CT_02021853)</name>
    <dbReference type="NCBI Taxonomy" id="439851"/>
    <lineage>
        <taxon>Bacteria</taxon>
        <taxon>Pseudomonadati</taxon>
        <taxon>Pseudomonadota</taxon>
        <taxon>Gammaproteobacteria</taxon>
        <taxon>Enterobacterales</taxon>
        <taxon>Enterobacteriaceae</taxon>
        <taxon>Salmonella</taxon>
    </lineage>
</organism>
<name>GLO2_SALDC</name>
<protein>
    <recommendedName>
        <fullName evidence="1">Hydroxyacylglutathione hydrolase</fullName>
        <ecNumber evidence="1">3.1.2.6</ecNumber>
    </recommendedName>
    <alternativeName>
        <fullName evidence="1">Glyoxalase II</fullName>
        <shortName evidence="1">Glx II</shortName>
    </alternativeName>
</protein>
<comment type="function">
    <text evidence="1">Thiolesterase that catalyzes the hydrolysis of S-D-lactoyl-glutathione to form glutathione and D-lactic acid.</text>
</comment>
<comment type="catalytic activity">
    <reaction evidence="1">
        <text>an S-(2-hydroxyacyl)glutathione + H2O = a 2-hydroxy carboxylate + glutathione + H(+)</text>
        <dbReference type="Rhea" id="RHEA:21864"/>
        <dbReference type="ChEBI" id="CHEBI:15377"/>
        <dbReference type="ChEBI" id="CHEBI:15378"/>
        <dbReference type="ChEBI" id="CHEBI:57925"/>
        <dbReference type="ChEBI" id="CHEBI:58896"/>
        <dbReference type="ChEBI" id="CHEBI:71261"/>
        <dbReference type="EC" id="3.1.2.6"/>
    </reaction>
</comment>
<comment type="cofactor">
    <cofactor evidence="1">
        <name>Zn(2+)</name>
        <dbReference type="ChEBI" id="CHEBI:29105"/>
    </cofactor>
    <text evidence="1">Binds 2 Zn(2+) ions per subunit.</text>
</comment>
<comment type="pathway">
    <text evidence="1">Secondary metabolite metabolism; methylglyoxal degradation; (R)-lactate from methylglyoxal: step 2/2.</text>
</comment>
<comment type="subunit">
    <text evidence="1">Monomer.</text>
</comment>
<comment type="similarity">
    <text evidence="1">Belongs to the metallo-beta-lactamase superfamily. Glyoxalase II family.</text>
</comment>
<accession>B5FJ56</accession>
<dbReference type="EC" id="3.1.2.6" evidence="1"/>
<dbReference type="EMBL" id="CP001144">
    <property type="protein sequence ID" value="ACH76383.1"/>
    <property type="molecule type" value="Genomic_DNA"/>
</dbReference>
<dbReference type="RefSeq" id="WP_001052774.1">
    <property type="nucleotide sequence ID" value="NC_011205.1"/>
</dbReference>
<dbReference type="SMR" id="B5FJ56"/>
<dbReference type="KEGG" id="sed:SeD_A0284"/>
<dbReference type="HOGENOM" id="CLU_030571_4_1_6"/>
<dbReference type="UniPathway" id="UPA00619">
    <property type="reaction ID" value="UER00676"/>
</dbReference>
<dbReference type="Proteomes" id="UP000008322">
    <property type="component" value="Chromosome"/>
</dbReference>
<dbReference type="GO" id="GO:0004416">
    <property type="term" value="F:hydroxyacylglutathione hydrolase activity"/>
    <property type="evidence" value="ECO:0007669"/>
    <property type="project" value="UniProtKB-UniRule"/>
</dbReference>
<dbReference type="GO" id="GO:0046872">
    <property type="term" value="F:metal ion binding"/>
    <property type="evidence" value="ECO:0007669"/>
    <property type="project" value="UniProtKB-KW"/>
</dbReference>
<dbReference type="GO" id="GO:0019243">
    <property type="term" value="P:methylglyoxal catabolic process to D-lactate via S-lactoyl-glutathione"/>
    <property type="evidence" value="ECO:0007669"/>
    <property type="project" value="InterPro"/>
</dbReference>
<dbReference type="CDD" id="cd07723">
    <property type="entry name" value="hydroxyacylglutathione_hydrolase_MBL-fold"/>
    <property type="match status" value="1"/>
</dbReference>
<dbReference type="Gene3D" id="3.60.15.10">
    <property type="entry name" value="Ribonuclease Z/Hydroxyacylglutathione hydrolase-like"/>
    <property type="match status" value="1"/>
</dbReference>
<dbReference type="HAMAP" id="MF_01374">
    <property type="entry name" value="Glyoxalase_2"/>
    <property type="match status" value="1"/>
</dbReference>
<dbReference type="InterPro" id="IPR035680">
    <property type="entry name" value="Clx_II_MBL"/>
</dbReference>
<dbReference type="InterPro" id="IPR050110">
    <property type="entry name" value="Glyoxalase_II_hydrolase"/>
</dbReference>
<dbReference type="InterPro" id="IPR032282">
    <property type="entry name" value="HAGH_C"/>
</dbReference>
<dbReference type="InterPro" id="IPR017782">
    <property type="entry name" value="Hydroxyacylglutathione_Hdrlase"/>
</dbReference>
<dbReference type="InterPro" id="IPR001279">
    <property type="entry name" value="Metallo-B-lactamas"/>
</dbReference>
<dbReference type="InterPro" id="IPR036866">
    <property type="entry name" value="RibonucZ/Hydroxyglut_hydro"/>
</dbReference>
<dbReference type="NCBIfam" id="TIGR03413">
    <property type="entry name" value="GSH_gloB"/>
    <property type="match status" value="1"/>
</dbReference>
<dbReference type="NCBIfam" id="NF007597">
    <property type="entry name" value="PRK10241.1"/>
    <property type="match status" value="1"/>
</dbReference>
<dbReference type="PANTHER" id="PTHR43705">
    <property type="entry name" value="HYDROXYACYLGLUTATHIONE HYDROLASE"/>
    <property type="match status" value="1"/>
</dbReference>
<dbReference type="PANTHER" id="PTHR43705:SF1">
    <property type="entry name" value="HYDROXYACYLGLUTATHIONE HYDROLASE GLOB"/>
    <property type="match status" value="1"/>
</dbReference>
<dbReference type="Pfam" id="PF16123">
    <property type="entry name" value="HAGH_C"/>
    <property type="match status" value="1"/>
</dbReference>
<dbReference type="Pfam" id="PF00753">
    <property type="entry name" value="Lactamase_B"/>
    <property type="match status" value="1"/>
</dbReference>
<dbReference type="PIRSF" id="PIRSF005457">
    <property type="entry name" value="Glx"/>
    <property type="match status" value="1"/>
</dbReference>
<dbReference type="SMART" id="SM00849">
    <property type="entry name" value="Lactamase_B"/>
    <property type="match status" value="1"/>
</dbReference>
<dbReference type="SUPFAM" id="SSF56281">
    <property type="entry name" value="Metallo-hydrolase/oxidoreductase"/>
    <property type="match status" value="1"/>
</dbReference>
<gene>
    <name evidence="1" type="primary">gloB</name>
    <name type="ordered locus">SeD_A0284</name>
</gene>